<reference evidence="8" key="1">
    <citation type="journal article" date="2009" name="PLoS Biol.">
        <title>Lineage-specific biology revealed by a finished genome assembly of the mouse.</title>
        <authorList>
            <person name="Church D.M."/>
            <person name="Goodstadt L."/>
            <person name="Hillier L.W."/>
            <person name="Zody M.C."/>
            <person name="Goldstein S."/>
            <person name="She X."/>
            <person name="Bult C.J."/>
            <person name="Agarwala R."/>
            <person name="Cherry J.L."/>
            <person name="DiCuccio M."/>
            <person name="Hlavina W."/>
            <person name="Kapustin Y."/>
            <person name="Meric P."/>
            <person name="Maglott D."/>
            <person name="Birtle Z."/>
            <person name="Marques A.C."/>
            <person name="Graves T."/>
            <person name="Zhou S."/>
            <person name="Teague B."/>
            <person name="Potamousis K."/>
            <person name="Churas C."/>
            <person name="Place M."/>
            <person name="Herschleb J."/>
            <person name="Runnheim R."/>
            <person name="Forrest D."/>
            <person name="Amos-Landgraf J."/>
            <person name="Schwartz D.C."/>
            <person name="Cheng Z."/>
            <person name="Lindblad-Toh K."/>
            <person name="Eichler E.E."/>
            <person name="Ponting C.P."/>
        </authorList>
    </citation>
    <scope>NUCLEOTIDE SEQUENCE [LARGE SCALE GENOMIC DNA]</scope>
    <source>
        <strain evidence="8">C57BL/6J</strain>
    </source>
</reference>
<reference evidence="6" key="2">
    <citation type="journal article" date="2009" name="Am. J. Hum. Genet.">
        <title>Mutations in the beta propeller WDR72 cause autosomal-recessive hypomaturation amelogenesis imperfecta.</title>
        <authorList>
            <person name="El-Sayed W."/>
            <person name="Parry D.A."/>
            <person name="Shore R.C."/>
            <person name="Ahmed M."/>
            <person name="Jafri H."/>
            <person name="Rashid Y."/>
            <person name="Al-Bahlani S."/>
            <person name="Al Harasi S."/>
            <person name="Kirkham J."/>
            <person name="Inglehearn C.F."/>
            <person name="Mighell A.J."/>
        </authorList>
    </citation>
    <scope>TISSUE SPECIFICITY</scope>
</reference>
<reference key="3">
    <citation type="journal article" date="2010" name="Cell">
        <title>A tissue-specific atlas of mouse protein phosphorylation and expression.</title>
        <authorList>
            <person name="Huttlin E.L."/>
            <person name="Jedrychowski M.P."/>
            <person name="Elias J.E."/>
            <person name="Goswami T."/>
            <person name="Rad R."/>
            <person name="Beausoleil S.A."/>
            <person name="Villen J."/>
            <person name="Haas W."/>
            <person name="Sowa M.E."/>
            <person name="Gygi S.P."/>
        </authorList>
    </citation>
    <scope>PHOSPHORYLATION [LARGE SCALE ANALYSIS] AT SER-1093 AND SER-1095</scope>
    <scope>IDENTIFICATION BY MASS SPECTROMETRY [LARGE SCALE ANALYSIS]</scope>
    <source>
        <tissue>Kidney</tissue>
    </source>
</reference>
<reference evidence="6" key="4">
    <citation type="journal article" date="2014" name="Matrix Biol.">
        <title>WDR72 models of structure and function: a stage-specific regulator of enamel mineralization.</title>
        <authorList>
            <person name="Katsura K.A."/>
            <person name="Horst J.A."/>
            <person name="Chandra D."/>
            <person name="Le T.Q."/>
            <person name="Nakano Y."/>
            <person name="Zhang Y."/>
            <person name="Horst O.V."/>
            <person name="Zhu L."/>
            <person name="Le M.H."/>
            <person name="DenBesten P.K."/>
        </authorList>
    </citation>
    <scope>FUNCTION</scope>
    <scope>SUBCELLULAR LOCATION</scope>
    <scope>TISSUE SPECIFICITY</scope>
    <scope>DISRUPTION PHENOTYPE</scope>
</reference>
<reference evidence="6" key="5">
    <citation type="journal article" date="2015" name="Mol. Genet. Genomic Med.">
        <title>Critical roles for WDR72 in calcium transport and matrix protein removal during enamel maturation.</title>
        <authorList>
            <person name="Wang S.K."/>
            <person name="Hu Y."/>
            <person name="Yang J."/>
            <person name="Smith C.E."/>
            <person name="Nunez S.M."/>
            <person name="Richardson A.S."/>
            <person name="Pal S."/>
            <person name="Samann A.C."/>
            <person name="Hu J.C."/>
            <person name="Simmer J.P."/>
        </authorList>
    </citation>
    <scope>FUNCTION</scope>
    <scope>DISRUPTION PHENOTYPE</scope>
</reference>
<dbReference type="EMBL" id="AC108944">
    <property type="status" value="NOT_ANNOTATED_CDS"/>
    <property type="molecule type" value="Genomic_DNA"/>
</dbReference>
<dbReference type="EMBL" id="AC111087">
    <property type="status" value="NOT_ANNOTATED_CDS"/>
    <property type="molecule type" value="Genomic_DNA"/>
</dbReference>
<dbReference type="CCDS" id="CCDS23338.2"/>
<dbReference type="RefSeq" id="NP_001028672.2">
    <property type="nucleotide sequence ID" value="NM_001033500.4"/>
</dbReference>
<dbReference type="RefSeq" id="XP_006511342.1">
    <property type="nucleotide sequence ID" value="XM_006511279.2"/>
</dbReference>
<dbReference type="FunCoup" id="D3YYM4">
    <property type="interactions" value="751"/>
</dbReference>
<dbReference type="STRING" id="10090.ENSMUSP00000057320"/>
<dbReference type="iPTMnet" id="D3YYM4"/>
<dbReference type="PhosphoSitePlus" id="D3YYM4"/>
<dbReference type="PaxDb" id="10090-ENSMUSP00000057320"/>
<dbReference type="ProteomicsDB" id="299750"/>
<dbReference type="Antibodypedia" id="68374">
    <property type="antibodies" value="13 antibodies from 5 providers"/>
</dbReference>
<dbReference type="Ensembl" id="ENSMUST00000055879.9">
    <property type="protein sequence ID" value="ENSMUSP00000057320.8"/>
    <property type="gene ID" value="ENSMUSG00000044976.18"/>
</dbReference>
<dbReference type="GeneID" id="546144"/>
<dbReference type="KEGG" id="mmu:546144"/>
<dbReference type="UCSC" id="uc009qre.1">
    <property type="organism name" value="mouse"/>
</dbReference>
<dbReference type="AGR" id="MGI:3583957"/>
<dbReference type="CTD" id="256764"/>
<dbReference type="MGI" id="MGI:3583957">
    <property type="gene designation" value="Wdr72"/>
</dbReference>
<dbReference type="VEuPathDB" id="HostDB:ENSMUSG00000044976"/>
<dbReference type="eggNOG" id="KOG4155">
    <property type="taxonomic scope" value="Eukaryota"/>
</dbReference>
<dbReference type="GeneTree" id="ENSGT00940000160298"/>
<dbReference type="HOGENOM" id="CLU_004362_0_0_1"/>
<dbReference type="InParanoid" id="D3YYM4"/>
<dbReference type="OMA" id="YHCSSRM"/>
<dbReference type="OrthoDB" id="338622at2759"/>
<dbReference type="PhylomeDB" id="D3YYM4"/>
<dbReference type="TreeFam" id="TF313196"/>
<dbReference type="BioGRID-ORCS" id="546144">
    <property type="hits" value="1 hit in 78 CRISPR screens"/>
</dbReference>
<dbReference type="ChiTaRS" id="Wdr72">
    <property type="organism name" value="mouse"/>
</dbReference>
<dbReference type="PRO" id="PR:D3YYM4"/>
<dbReference type="Proteomes" id="UP000000589">
    <property type="component" value="Chromosome 9"/>
</dbReference>
<dbReference type="RNAct" id="D3YYM4">
    <property type="molecule type" value="protein"/>
</dbReference>
<dbReference type="Bgee" id="ENSMUSG00000044976">
    <property type="expression patterns" value="Expressed in right kidney and 36 other cell types or tissues"/>
</dbReference>
<dbReference type="ExpressionAtlas" id="D3YYM4">
    <property type="expression patterns" value="baseline and differential"/>
</dbReference>
<dbReference type="GO" id="GO:0005768">
    <property type="term" value="C:endosome"/>
    <property type="evidence" value="ECO:0000314"/>
    <property type="project" value="MGI"/>
</dbReference>
<dbReference type="GO" id="GO:0005634">
    <property type="term" value="C:nucleus"/>
    <property type="evidence" value="ECO:0000314"/>
    <property type="project" value="MGI"/>
</dbReference>
<dbReference type="GO" id="GO:0036305">
    <property type="term" value="P:ameloblast differentiation"/>
    <property type="evidence" value="ECO:0000315"/>
    <property type="project" value="MGI"/>
</dbReference>
<dbReference type="GO" id="GO:0097186">
    <property type="term" value="P:amelogenesis"/>
    <property type="evidence" value="ECO:0000315"/>
    <property type="project" value="MGI"/>
</dbReference>
<dbReference type="GO" id="GO:0070166">
    <property type="term" value="P:enamel mineralization"/>
    <property type="evidence" value="ECO:0000315"/>
    <property type="project" value="MGI"/>
</dbReference>
<dbReference type="GO" id="GO:0006897">
    <property type="term" value="P:endocytosis"/>
    <property type="evidence" value="ECO:0000315"/>
    <property type="project" value="MGI"/>
</dbReference>
<dbReference type="GO" id="GO:0022617">
    <property type="term" value="P:extracellular matrix disassembly"/>
    <property type="evidence" value="ECO:0000315"/>
    <property type="project" value="MGI"/>
</dbReference>
<dbReference type="GO" id="GO:0030198">
    <property type="term" value="P:extracellular matrix organization"/>
    <property type="evidence" value="ECO:0000315"/>
    <property type="project" value="MGI"/>
</dbReference>
<dbReference type="GO" id="GO:0010467">
    <property type="term" value="P:gene expression"/>
    <property type="evidence" value="ECO:0000315"/>
    <property type="project" value="MGI"/>
</dbReference>
<dbReference type="GO" id="GO:0046785">
    <property type="term" value="P:microtubule polymerization"/>
    <property type="evidence" value="ECO:0000315"/>
    <property type="project" value="MGI"/>
</dbReference>
<dbReference type="GO" id="GO:0043491">
    <property type="term" value="P:phosphatidylinositol 3-kinase/protein kinase B signal transduction"/>
    <property type="evidence" value="ECO:0000315"/>
    <property type="project" value="MGI"/>
</dbReference>
<dbReference type="GO" id="GO:0017038">
    <property type="term" value="P:protein import"/>
    <property type="evidence" value="ECO:0000315"/>
    <property type="project" value="MGI"/>
</dbReference>
<dbReference type="GO" id="GO:0008104">
    <property type="term" value="P:protein localization"/>
    <property type="evidence" value="ECO:0000315"/>
    <property type="project" value="MGI"/>
</dbReference>
<dbReference type="GO" id="GO:0072659">
    <property type="term" value="P:protein localization to plasma membrane"/>
    <property type="evidence" value="ECO:0000315"/>
    <property type="project" value="MGI"/>
</dbReference>
<dbReference type="GO" id="GO:0006885">
    <property type="term" value="P:regulation of pH"/>
    <property type="evidence" value="ECO:0000315"/>
    <property type="project" value="MGI"/>
</dbReference>
<dbReference type="GO" id="GO:0031529">
    <property type="term" value="P:ruffle organization"/>
    <property type="evidence" value="ECO:0000315"/>
    <property type="project" value="MGI"/>
</dbReference>
<dbReference type="GO" id="GO:0007021">
    <property type="term" value="P:tubulin complex assembly"/>
    <property type="evidence" value="ECO:0000315"/>
    <property type="project" value="MGI"/>
</dbReference>
<dbReference type="GO" id="GO:0016050">
    <property type="term" value="P:vesicle organization"/>
    <property type="evidence" value="ECO:0000315"/>
    <property type="project" value="MGI"/>
</dbReference>
<dbReference type="GO" id="GO:0016192">
    <property type="term" value="P:vesicle-mediated transport"/>
    <property type="evidence" value="ECO:0000315"/>
    <property type="project" value="MGI"/>
</dbReference>
<dbReference type="FunFam" id="2.130.10.10:FF:000247">
    <property type="entry name" value="WD repeat-containing protein 72"/>
    <property type="match status" value="1"/>
</dbReference>
<dbReference type="Gene3D" id="2.130.10.10">
    <property type="entry name" value="YVTN repeat-like/Quinoprotein amine dehydrogenase"/>
    <property type="match status" value="2"/>
</dbReference>
<dbReference type="InterPro" id="IPR011044">
    <property type="entry name" value="Quino_amine_DH_bsu"/>
</dbReference>
<dbReference type="InterPro" id="IPR015943">
    <property type="entry name" value="WD40/YVTN_repeat-like_dom_sf"/>
</dbReference>
<dbReference type="InterPro" id="IPR019775">
    <property type="entry name" value="WD40_repeat_CS"/>
</dbReference>
<dbReference type="InterPro" id="IPR036322">
    <property type="entry name" value="WD40_repeat_dom_sf"/>
</dbReference>
<dbReference type="InterPro" id="IPR001680">
    <property type="entry name" value="WD40_rpt"/>
</dbReference>
<dbReference type="InterPro" id="IPR049916">
    <property type="entry name" value="WDR7/72"/>
</dbReference>
<dbReference type="PANTHER" id="PTHR44099">
    <property type="entry name" value="RABCONNECTIN-3B, ISOFORM A"/>
    <property type="match status" value="1"/>
</dbReference>
<dbReference type="PANTHER" id="PTHR44099:SF2">
    <property type="entry name" value="WD REPEAT-CONTAINING PROTEIN 72"/>
    <property type="match status" value="1"/>
</dbReference>
<dbReference type="Pfam" id="PF00400">
    <property type="entry name" value="WD40"/>
    <property type="match status" value="1"/>
</dbReference>
<dbReference type="Pfam" id="PF23123">
    <property type="entry name" value="WDR72_alpha-sol"/>
    <property type="match status" value="1"/>
</dbReference>
<dbReference type="SMART" id="SM00320">
    <property type="entry name" value="WD40"/>
    <property type="match status" value="7"/>
</dbReference>
<dbReference type="SUPFAM" id="SSF50978">
    <property type="entry name" value="WD40 repeat-like"/>
    <property type="match status" value="1"/>
</dbReference>
<dbReference type="SUPFAM" id="SSF50969">
    <property type="entry name" value="YVTN repeat-like/Quinoprotein amine dehydrogenase"/>
    <property type="match status" value="1"/>
</dbReference>
<dbReference type="PROSITE" id="PS00678">
    <property type="entry name" value="WD_REPEATS_1"/>
    <property type="match status" value="1"/>
</dbReference>
<dbReference type="PROSITE" id="PS50082">
    <property type="entry name" value="WD_REPEATS_2"/>
    <property type="match status" value="2"/>
</dbReference>
<dbReference type="PROSITE" id="PS50294">
    <property type="entry name" value="WD_REPEATS_REGION"/>
    <property type="match status" value="2"/>
</dbReference>
<name>WDR72_MOUSE</name>
<feature type="chain" id="PRO_0000438188" description="WD repeat-containing protein 72">
    <location>
        <begin position="1"/>
        <end position="1114"/>
    </location>
</feature>
<feature type="repeat" description="WD 1" evidence="2">
    <location>
        <begin position="15"/>
        <end position="54"/>
    </location>
</feature>
<feature type="repeat" description="WD 2" evidence="2">
    <location>
        <begin position="60"/>
        <end position="102"/>
    </location>
</feature>
<feature type="repeat" description="WD 3" evidence="2">
    <location>
        <begin position="160"/>
        <end position="197"/>
    </location>
</feature>
<feature type="repeat" description="WD 4" evidence="2">
    <location>
        <begin position="327"/>
        <end position="373"/>
    </location>
</feature>
<feature type="repeat" description="WD 5" evidence="2">
    <location>
        <begin position="413"/>
        <end position="452"/>
    </location>
</feature>
<feature type="repeat" description="WD 6" evidence="2">
    <location>
        <begin position="470"/>
        <end position="515"/>
    </location>
</feature>
<feature type="repeat" description="WD 7" evidence="2">
    <location>
        <begin position="566"/>
        <end position="605"/>
    </location>
</feature>
<feature type="region of interest" description="Disordered" evidence="3">
    <location>
        <begin position="634"/>
        <end position="658"/>
    </location>
</feature>
<feature type="region of interest" description="Disordered" evidence="3">
    <location>
        <begin position="749"/>
        <end position="798"/>
    </location>
</feature>
<feature type="compositionally biased region" description="Basic residues" evidence="3">
    <location>
        <begin position="780"/>
        <end position="796"/>
    </location>
</feature>
<feature type="modified residue" description="Phosphoserine" evidence="9">
    <location>
        <position position="1093"/>
    </location>
</feature>
<feature type="modified residue" description="Phosphoserine" evidence="9">
    <location>
        <position position="1095"/>
    </location>
</feature>
<gene>
    <name evidence="7" type="primary">Wdr72</name>
</gene>
<proteinExistence type="evidence at protein level"/>
<protein>
    <recommendedName>
        <fullName evidence="1">WD repeat-containing protein 72</fullName>
    </recommendedName>
</protein>
<comment type="function">
    <text evidence="4 5">Plays a major role in formation of tooth enamel (PubMed:25008349, PubMed:26247047). Specifically required during the maturation phase of amelogenesis for normal formation of the enamel matrix and clearance of enamel proteins (PubMed:25008349, PubMed:26247047). May be involved in localization of the calcium transporter SLC24A4 to the ameloblast cell membrane (PubMed:26247047).</text>
</comment>
<comment type="subcellular location">
    <subcellularLocation>
        <location evidence="4">Cytoplasmic vesicle</location>
    </subcellularLocation>
</comment>
<comment type="tissue specificity">
    <text>Expressed in maturation stage ameloblasts (at protein level) (PubMed:19853237, PubMed:25008349).</text>
</comment>
<comment type="disruption phenotype">
    <text evidence="4 5">Viable with no gross morpholgical defects (PubMed:25008349, PubMed:26247047). At 6-7 weeks of age teeth have an opaque, chalky appearance, with reduced enamel thickness at occlusal surfaces (PubMed:25008349, PubMed:26247047). Body weight is reduced, probably due to problems with chewing hard foods (PubMed:25008349). Enamel formation is abnormal from the maturation stage onwards with significantly reduced mineral density and retention of proteinaceous material in the enamel matrix (PubMed:25008349, PubMed:26247047). Tooth enamel hardness is ten times lower than wild type (PubMed:26247047). Attachment of ameloblasts to the enamel layer may be weakened (PubMed:26247047). The calcium transporter SLC24A4 fails to localize to the distal ameloblast membrane (PubMed:26247047). In maturation stage ameloblasts expression levels of amelogenin appear to be reduced, although abnormally high amelogenin levels are found in the extracellular enamel matrix (PubMed:25008349, PubMed:26247047).</text>
</comment>
<organism evidence="8">
    <name type="scientific">Mus musculus</name>
    <name type="common">Mouse</name>
    <dbReference type="NCBI Taxonomy" id="10090"/>
    <lineage>
        <taxon>Eukaryota</taxon>
        <taxon>Metazoa</taxon>
        <taxon>Chordata</taxon>
        <taxon>Craniata</taxon>
        <taxon>Vertebrata</taxon>
        <taxon>Euteleostomi</taxon>
        <taxon>Mammalia</taxon>
        <taxon>Eutheria</taxon>
        <taxon>Euarchontoglires</taxon>
        <taxon>Glires</taxon>
        <taxon>Rodentia</taxon>
        <taxon>Myomorpha</taxon>
        <taxon>Muroidea</taxon>
        <taxon>Muridae</taxon>
        <taxon>Murinae</taxon>
        <taxon>Mus</taxon>
        <taxon>Mus</taxon>
    </lineage>
</organism>
<keyword id="KW-0091">Biomineralization</keyword>
<keyword id="KW-0968">Cytoplasmic vesicle</keyword>
<keyword id="KW-0597">Phosphoprotein</keyword>
<keyword id="KW-1185">Reference proteome</keyword>
<keyword id="KW-0677">Repeat</keyword>
<keyword id="KW-0853">WD repeat</keyword>
<evidence type="ECO:0000250" key="1">
    <source>
        <dbReference type="UniProtKB" id="Q3MJ13"/>
    </source>
</evidence>
<evidence type="ECO:0000255" key="2"/>
<evidence type="ECO:0000256" key="3">
    <source>
        <dbReference type="SAM" id="MobiDB-lite"/>
    </source>
</evidence>
<evidence type="ECO:0000269" key="4">
    <source>
    </source>
</evidence>
<evidence type="ECO:0000269" key="5">
    <source>
    </source>
</evidence>
<evidence type="ECO:0000305" key="6"/>
<evidence type="ECO:0000312" key="7">
    <source>
        <dbReference type="MGI" id="MGI:3583957"/>
    </source>
</evidence>
<evidence type="ECO:0000312" key="8">
    <source>
        <dbReference type="Proteomes" id="UP000000589"/>
    </source>
</evidence>
<evidence type="ECO:0007744" key="9">
    <source>
    </source>
</evidence>
<accession>D3YYM4</accession>
<sequence>MRGALQAVALWGRKAPPHSITAIMITDDQQTIVTGSQEGQLCLWSLSPELKISAKELLFGHSASVTCLARARDFSKQPYVVSAAENGEMCMWNVSSGQCVEKTSLPYRHTAICYYHCSFRMTGEGWLLCCGEYQDVLVLDAGTLAVLHTFTSLQSPDWMKCMCIVHSVRIQEDSLLVVSITGELKVWDLSSSINSIQEKQDVHEKESKFLDSFNCQTIRFCPYTERLLLVVFSKCWKIYDYCDFSLLWTEVSRDGQFFAGGEVLAAHRILVWTEDGHSYIYQLLNRWAQMGATLRTFSGLSKCVCPADGGVLKGTVYPHLLCSTSVEENKSLHFVMGYMNERKEPFYKVLFSGEVSGRITLWHIPDVPISKFDGSPREIPITTTWTLQDNFDKHQMVSQSITDHFSGSRDEVGMTATITSSEYIPNLDKLICGCEDGTIFITKALNAAKAGLLEGDSLLKDSPCHTLLRGHHQSVTSLLYPHNLASKLDQSWMVSGDRGSYVILWDIFTEEILHTFFLEAGPVTRLLMSPENLKRSDGQILCCVCGDHSVALLHLEGRRCLLRARKHLFPVRMIRWHPVENFLIVGCTDDSVYIWEIETGTLERHETGERARIILNCGDDAQLIRSEPTLSVASETHKHKSIEQKSSNSHQPGPVPCPSVQLESSCKVADASSVPRPFNVLPVKTKWSHIGFHVLLFDLENLVELLLPTPLSDVDPSGSFYGGDILRRAKSTVEKKTLTIRRNKASCSSLQTEAQAKPSGDSLVLGDSTSKFSEENNGIKRQKKMKSSKKAHPKPPRKVDASLTIDMAKLFLSCILPWGVDKDLDSLCTRHLSILKLQGPVSLGLASNEDLFSLMLPGWDACSTEMKEYSGVNLCSRKVLDLSSKYTATLLHQTGIPRGLESHCDSVQQSDAIVYLLSRLFLVNKLVNMPLDLACEIDRPFKMETVHSKARFPGSDILNISSFYGHPKNGGNECRAPEADLSLLKLISCWRDQSVQVTEAIQAVLLAEVQQHMKSLRNTPVSSQPDPVAEHSICERMQISAKMEWTEELELQYVGKSSPLKTSVSPVKHGNDLNSANFQDTEDILDRCVLEESESAGQPRHRPWIAKVCSCRMC</sequence>